<dbReference type="EMBL" id="AAEY01000011">
    <property type="protein sequence ID" value="EAL22339.1"/>
    <property type="molecule type" value="Genomic_DNA"/>
</dbReference>
<dbReference type="RefSeq" id="XP_776986.1">
    <property type="nucleotide sequence ID" value="XM_771893.1"/>
</dbReference>
<dbReference type="SMR" id="P0CO03"/>
<dbReference type="EnsemblFungi" id="AAW41759">
    <property type="protein sequence ID" value="AAW41759"/>
    <property type="gene ID" value="CNB00560"/>
</dbReference>
<dbReference type="GeneID" id="4934609"/>
<dbReference type="KEGG" id="cnb:CNBB5140"/>
<dbReference type="VEuPathDB" id="FungiDB:CNBB5140"/>
<dbReference type="HOGENOM" id="CLU_075666_2_1_1"/>
<dbReference type="GO" id="GO:0000786">
    <property type="term" value="C:nucleosome"/>
    <property type="evidence" value="ECO:0007669"/>
    <property type="project" value="UniProtKB-KW"/>
</dbReference>
<dbReference type="GO" id="GO:0005634">
    <property type="term" value="C:nucleus"/>
    <property type="evidence" value="ECO:0007669"/>
    <property type="project" value="UniProtKB-SubCell"/>
</dbReference>
<dbReference type="GO" id="GO:0035861">
    <property type="term" value="C:site of double-strand break"/>
    <property type="evidence" value="ECO:0007669"/>
    <property type="project" value="EnsemblFungi"/>
</dbReference>
<dbReference type="GO" id="GO:0003677">
    <property type="term" value="F:DNA binding"/>
    <property type="evidence" value="ECO:0007669"/>
    <property type="project" value="UniProtKB-KW"/>
</dbReference>
<dbReference type="GO" id="GO:0046982">
    <property type="term" value="F:protein heterodimerization activity"/>
    <property type="evidence" value="ECO:0007669"/>
    <property type="project" value="InterPro"/>
</dbReference>
<dbReference type="GO" id="GO:0030527">
    <property type="term" value="F:structural constituent of chromatin"/>
    <property type="evidence" value="ECO:0007669"/>
    <property type="project" value="InterPro"/>
</dbReference>
<dbReference type="CDD" id="cd22910">
    <property type="entry name" value="HFD_H2B"/>
    <property type="match status" value="1"/>
</dbReference>
<dbReference type="FunFam" id="1.10.20.10:FF:000014">
    <property type="entry name" value="Histone H2B"/>
    <property type="match status" value="1"/>
</dbReference>
<dbReference type="Gene3D" id="1.10.20.10">
    <property type="entry name" value="Histone, subunit A"/>
    <property type="match status" value="1"/>
</dbReference>
<dbReference type="InterPro" id="IPR009072">
    <property type="entry name" value="Histone-fold"/>
</dbReference>
<dbReference type="InterPro" id="IPR007125">
    <property type="entry name" value="Histone_H2A/H2B/H3"/>
</dbReference>
<dbReference type="InterPro" id="IPR000558">
    <property type="entry name" value="Histone_H2B"/>
</dbReference>
<dbReference type="InterPro" id="IPR055333">
    <property type="entry name" value="HISTONE_H2B_site"/>
</dbReference>
<dbReference type="PANTHER" id="PTHR23428">
    <property type="entry name" value="HISTONE H2B"/>
    <property type="match status" value="1"/>
</dbReference>
<dbReference type="Pfam" id="PF00125">
    <property type="entry name" value="Histone"/>
    <property type="match status" value="1"/>
</dbReference>
<dbReference type="PRINTS" id="PR00621">
    <property type="entry name" value="HISTONEH2B"/>
</dbReference>
<dbReference type="SMART" id="SM00427">
    <property type="entry name" value="H2B"/>
    <property type="match status" value="1"/>
</dbReference>
<dbReference type="SUPFAM" id="SSF47113">
    <property type="entry name" value="Histone-fold"/>
    <property type="match status" value="1"/>
</dbReference>
<dbReference type="PROSITE" id="PS00357">
    <property type="entry name" value="HISTONE_H2B"/>
    <property type="match status" value="1"/>
</dbReference>
<protein>
    <recommendedName>
        <fullName>Histone H2B</fullName>
    </recommendedName>
</protein>
<reference key="1">
    <citation type="journal article" date="2005" name="Science">
        <title>The genome of the basidiomycetous yeast and human pathogen Cryptococcus neoformans.</title>
        <authorList>
            <person name="Loftus B.J."/>
            <person name="Fung E."/>
            <person name="Roncaglia P."/>
            <person name="Rowley D."/>
            <person name="Amedeo P."/>
            <person name="Bruno D."/>
            <person name="Vamathevan J."/>
            <person name="Miranda M."/>
            <person name="Anderson I.J."/>
            <person name="Fraser J.A."/>
            <person name="Allen J.E."/>
            <person name="Bosdet I.E."/>
            <person name="Brent M.R."/>
            <person name="Chiu R."/>
            <person name="Doering T.L."/>
            <person name="Donlin M.J."/>
            <person name="D'Souza C.A."/>
            <person name="Fox D.S."/>
            <person name="Grinberg V."/>
            <person name="Fu J."/>
            <person name="Fukushima M."/>
            <person name="Haas B.J."/>
            <person name="Huang J.C."/>
            <person name="Janbon G."/>
            <person name="Jones S.J.M."/>
            <person name="Koo H.L."/>
            <person name="Krzywinski M.I."/>
            <person name="Kwon-Chung K.J."/>
            <person name="Lengeler K.B."/>
            <person name="Maiti R."/>
            <person name="Marra M.A."/>
            <person name="Marra R.E."/>
            <person name="Mathewson C.A."/>
            <person name="Mitchell T.G."/>
            <person name="Pertea M."/>
            <person name="Riggs F.R."/>
            <person name="Salzberg S.L."/>
            <person name="Schein J.E."/>
            <person name="Shvartsbeyn A."/>
            <person name="Shin H."/>
            <person name="Shumway M."/>
            <person name="Specht C.A."/>
            <person name="Suh B.B."/>
            <person name="Tenney A."/>
            <person name="Utterback T.R."/>
            <person name="Wickes B.L."/>
            <person name="Wortman J.R."/>
            <person name="Wye N.H."/>
            <person name="Kronstad J.W."/>
            <person name="Lodge J.K."/>
            <person name="Heitman J."/>
            <person name="Davis R.W."/>
            <person name="Fraser C.M."/>
            <person name="Hyman R.W."/>
        </authorList>
    </citation>
    <scope>NUCLEOTIDE SEQUENCE [LARGE SCALE GENOMIC DNA]</scope>
    <source>
        <strain>B-3501A</strain>
    </source>
</reference>
<keyword id="KW-0007">Acetylation</keyword>
<keyword id="KW-0158">Chromosome</keyword>
<keyword id="KW-0238">DNA-binding</keyword>
<keyword id="KW-1017">Isopeptide bond</keyword>
<keyword id="KW-0544">Nucleosome core</keyword>
<keyword id="KW-0539">Nucleus</keyword>
<keyword id="KW-0597">Phosphoprotein</keyword>
<keyword id="KW-0832">Ubl conjugation</keyword>
<feature type="initiator methionine" description="Removed" evidence="1">
    <location>
        <position position="1"/>
    </location>
</feature>
<feature type="chain" id="PRO_0000410106" description="Histone H2B">
    <location>
        <begin position="2"/>
        <end position="139"/>
    </location>
</feature>
<feature type="region of interest" description="Disordered" evidence="2">
    <location>
        <begin position="1"/>
        <end position="48"/>
    </location>
</feature>
<feature type="compositionally biased region" description="Low complexity" evidence="2">
    <location>
        <begin position="1"/>
        <end position="37"/>
    </location>
</feature>
<feature type="modified residue" description="N6-acetyllysine; alternate" evidence="1">
    <location>
        <position position="9"/>
    </location>
</feature>
<feature type="modified residue" description="Phosphoserine" evidence="1">
    <location>
        <position position="13"/>
    </location>
</feature>
<feature type="modified residue" description="N6-acetyllysine" evidence="1">
    <location>
        <position position="17"/>
    </location>
</feature>
<feature type="cross-link" description="Glycyl lysine isopeptide (Lys-Gly) (interchain with G-Cter in SUMO); alternate" evidence="1">
    <location>
        <position position="9"/>
    </location>
</feature>
<feature type="cross-link" description="Glycyl lysine isopeptide (Lys-Gly) (interchain with G-Cter in ubiquitin)" evidence="1">
    <location>
        <position position="134"/>
    </location>
</feature>
<comment type="function">
    <text>Core component of nucleosome. Nucleosomes wrap and compact DNA into chromatin, limiting DNA accessibility to the cellular machineries which require DNA as a template. Histones thereby play a central role in transcription regulation, DNA repair, DNA replication and chromosomal stability. DNA accessibility is regulated via a complex set of post-translational modifications of histones, also called histone code, and nucleosome remodeling.</text>
</comment>
<comment type="subunit">
    <text>The nucleosome is a histone octamer containing two molecules each of H2A, H2B, H3 and H4 assembled in one H3-H4 heterotetramer and two H2A-H2B heterodimers. The octamer wraps approximately 147 bp of DNA.</text>
</comment>
<comment type="subcellular location">
    <subcellularLocation>
        <location>Nucleus</location>
    </subcellularLocation>
    <subcellularLocation>
        <location>Chromosome</location>
    </subcellularLocation>
</comment>
<comment type="PTM">
    <text evidence="1">Monoubiquitinated by the UBC2-BRE1 complex to form H2BK123ub1. H2BK123ub1 gives a specific tag for epigenetic transcriptional activation and is also prerequisite for H3K4me and H3K79me formation. H2BK123ub1 also modulates the formation of double-strand breaks during meiosis and is a prerequisite for DNA-damage checkpoint activation (By similarity).</text>
</comment>
<comment type="PTM">
    <text evidence="1">Phosphorylated to form H2BS10ph during progression through meiotic prophase. May be correlated with chromosome condensation (By similarity).</text>
</comment>
<comment type="PTM">
    <text evidence="1">Acetylation of N-terminal lysines and particularly formation of H2BK11ac has a positive effect on transcription.</text>
</comment>
<comment type="PTM">
    <text evidence="1">Sumoylation to form H2BK6su occurs preferentially near the telomeres and represses gene transcription.</text>
</comment>
<comment type="similarity">
    <text evidence="3">Belongs to the histone H2B family.</text>
</comment>
<comment type="caution">
    <text evidence="3">To ensure consistency between histone entries, we follow the 'Brno' nomenclature for histone modifications, with positions referring to those used in the literature for the 'closest' model organism. Due to slight variations in histone sequences between organisms and to the presence of initiator methionine in UniProtKB/Swiss-Prot sequences, the actual positions of modified amino acids in the sequence generally differ. In this entry the following conventions are used: H2BK6ac = acetylated Lys-9; H2BK6su = sumoylated Lys-9; H2BS10ph = phosphorylated Ser-13; H2BK11ac = acetylated Lys-17; H2BK123ub1 = monoubiquitinated Lys-134.</text>
</comment>
<gene>
    <name type="primary">HTB1</name>
    <name type="ordered locus">CNBB5140</name>
</gene>
<evidence type="ECO:0000250" key="1"/>
<evidence type="ECO:0000256" key="2">
    <source>
        <dbReference type="SAM" id="MobiDB-lite"/>
    </source>
</evidence>
<evidence type="ECO:0000305" key="3"/>
<accession>P0CO03</accession>
<accession>Q55X48</accession>
<accession>Q5KMT4</accession>
<proteinExistence type="inferred from homology"/>
<name>H2B_CRYNB</name>
<sequence length="139" mass="14753">MAPKSVASKAPASQASKAPAAASKAPAKAAKTSAAPKDGAKKRSKKRVESYSSYIYKVLKQVHPDTGISNKAMAILNSFVSDIFERIATEASKLASYNHRSTISSREIQTSVRLILPGELSKHAISEGTKAVTKYSSSK</sequence>
<organism>
    <name type="scientific">Cryptococcus neoformans var. neoformans serotype D (strain B-3501A)</name>
    <name type="common">Filobasidiella neoformans</name>
    <dbReference type="NCBI Taxonomy" id="283643"/>
    <lineage>
        <taxon>Eukaryota</taxon>
        <taxon>Fungi</taxon>
        <taxon>Dikarya</taxon>
        <taxon>Basidiomycota</taxon>
        <taxon>Agaricomycotina</taxon>
        <taxon>Tremellomycetes</taxon>
        <taxon>Tremellales</taxon>
        <taxon>Cryptococcaceae</taxon>
        <taxon>Cryptococcus</taxon>
        <taxon>Cryptococcus neoformans species complex</taxon>
    </lineage>
</organism>